<keyword id="KW-0997">Cell inner membrane</keyword>
<keyword id="KW-1003">Cell membrane</keyword>
<keyword id="KW-0444">Lipid biosynthesis</keyword>
<keyword id="KW-0443">Lipid metabolism</keyword>
<keyword id="KW-0472">Membrane</keyword>
<keyword id="KW-0594">Phospholipid biosynthesis</keyword>
<keyword id="KW-1208">Phospholipid metabolism</keyword>
<keyword id="KW-1185">Reference proteome</keyword>
<keyword id="KW-0808">Transferase</keyword>
<keyword id="KW-0812">Transmembrane</keyword>
<keyword id="KW-1133">Transmembrane helix</keyword>
<sequence length="203" mass="21997">MTPLVLLIIIGAYLLGSISSAVLISRLYRLPDPRDSGSGNPGATNVLRLGGKSAASMVLVCDVLKGMLPVWLSYFLNINPFLLGIIGIAACLGHIYPIFFHFRGGKGVATALGALAPIGWDLSGMLIGTWLLTVFITGYSSLGSLITALAAPLLTWFVKPEYTMAVSMLSCLIVLRHHDNLRRLFEGKETKIWQKISRKAKLK</sequence>
<organism>
    <name type="scientific">Photobacterium profundum (strain SS9)</name>
    <dbReference type="NCBI Taxonomy" id="298386"/>
    <lineage>
        <taxon>Bacteria</taxon>
        <taxon>Pseudomonadati</taxon>
        <taxon>Pseudomonadota</taxon>
        <taxon>Gammaproteobacteria</taxon>
        <taxon>Vibrionales</taxon>
        <taxon>Vibrionaceae</taxon>
        <taxon>Photobacterium</taxon>
    </lineage>
</organism>
<name>PLSY_PHOPR</name>
<comment type="function">
    <text evidence="1">Catalyzes the transfer of an acyl group from acyl-phosphate (acyl-PO(4)) to glycerol-3-phosphate (G3P) to form lysophosphatidic acid (LPA). This enzyme utilizes acyl-phosphate as fatty acyl donor, but not acyl-CoA or acyl-ACP.</text>
</comment>
<comment type="catalytic activity">
    <reaction evidence="1">
        <text>an acyl phosphate + sn-glycerol 3-phosphate = a 1-acyl-sn-glycero-3-phosphate + phosphate</text>
        <dbReference type="Rhea" id="RHEA:34075"/>
        <dbReference type="ChEBI" id="CHEBI:43474"/>
        <dbReference type="ChEBI" id="CHEBI:57597"/>
        <dbReference type="ChEBI" id="CHEBI:57970"/>
        <dbReference type="ChEBI" id="CHEBI:59918"/>
        <dbReference type="EC" id="2.3.1.275"/>
    </reaction>
</comment>
<comment type="pathway">
    <text evidence="1">Lipid metabolism; phospholipid metabolism.</text>
</comment>
<comment type="subunit">
    <text evidence="1">Probably interacts with PlsX.</text>
</comment>
<comment type="subcellular location">
    <subcellularLocation>
        <location evidence="1">Cell inner membrane</location>
        <topology evidence="1">Multi-pass membrane protein</topology>
    </subcellularLocation>
</comment>
<comment type="similarity">
    <text evidence="1">Belongs to the PlsY family.</text>
</comment>
<accession>Q6LV09</accession>
<reference key="1">
    <citation type="journal article" date="2005" name="Science">
        <title>Life at depth: Photobacterium profundum genome sequence and expression analysis.</title>
        <authorList>
            <person name="Vezzi A."/>
            <person name="Campanaro S."/>
            <person name="D'Angelo M."/>
            <person name="Simonato F."/>
            <person name="Vitulo N."/>
            <person name="Lauro F.M."/>
            <person name="Cestaro A."/>
            <person name="Malacrida G."/>
            <person name="Simionati B."/>
            <person name="Cannata N."/>
            <person name="Romualdi C."/>
            <person name="Bartlett D.H."/>
            <person name="Valle G."/>
        </authorList>
    </citation>
    <scope>NUCLEOTIDE SEQUENCE [LARGE SCALE GENOMIC DNA]</scope>
    <source>
        <strain>ATCC BAA-1253 / SS9</strain>
    </source>
</reference>
<protein>
    <recommendedName>
        <fullName evidence="1">Glycerol-3-phosphate acyltransferase</fullName>
    </recommendedName>
    <alternativeName>
        <fullName evidence="1">Acyl-PO4 G3P acyltransferase</fullName>
    </alternativeName>
    <alternativeName>
        <fullName evidence="1">Acyl-phosphate--glycerol-3-phosphate acyltransferase</fullName>
    </alternativeName>
    <alternativeName>
        <fullName evidence="1">G3P acyltransferase</fullName>
        <shortName evidence="1">GPAT</shortName>
        <ecNumber evidence="1">2.3.1.275</ecNumber>
    </alternativeName>
    <alternativeName>
        <fullName evidence="1">Lysophosphatidic acid synthase</fullName>
        <shortName evidence="1">LPA synthase</shortName>
    </alternativeName>
</protein>
<proteinExistence type="inferred from homology"/>
<dbReference type="EC" id="2.3.1.275" evidence="1"/>
<dbReference type="EMBL" id="CR378664">
    <property type="protein sequence ID" value="CAG18866.1"/>
    <property type="molecule type" value="Genomic_DNA"/>
</dbReference>
<dbReference type="RefSeq" id="WP_011217222.1">
    <property type="nucleotide sequence ID" value="NC_006370.1"/>
</dbReference>
<dbReference type="SMR" id="Q6LV09"/>
<dbReference type="STRING" id="298386.PBPRA0435"/>
<dbReference type="KEGG" id="ppr:PBPRA0435"/>
<dbReference type="eggNOG" id="COG0344">
    <property type="taxonomic scope" value="Bacteria"/>
</dbReference>
<dbReference type="HOGENOM" id="CLU_081254_0_2_6"/>
<dbReference type="UniPathway" id="UPA00085"/>
<dbReference type="Proteomes" id="UP000000593">
    <property type="component" value="Chromosome 1"/>
</dbReference>
<dbReference type="GO" id="GO:0005886">
    <property type="term" value="C:plasma membrane"/>
    <property type="evidence" value="ECO:0007669"/>
    <property type="project" value="UniProtKB-SubCell"/>
</dbReference>
<dbReference type="GO" id="GO:0043772">
    <property type="term" value="F:acyl-phosphate glycerol-3-phosphate acyltransferase activity"/>
    <property type="evidence" value="ECO:0007669"/>
    <property type="project" value="UniProtKB-UniRule"/>
</dbReference>
<dbReference type="GO" id="GO:0008654">
    <property type="term" value="P:phospholipid biosynthetic process"/>
    <property type="evidence" value="ECO:0007669"/>
    <property type="project" value="UniProtKB-UniRule"/>
</dbReference>
<dbReference type="HAMAP" id="MF_01043">
    <property type="entry name" value="PlsY"/>
    <property type="match status" value="1"/>
</dbReference>
<dbReference type="InterPro" id="IPR003811">
    <property type="entry name" value="G3P_acylTferase_PlsY"/>
</dbReference>
<dbReference type="NCBIfam" id="TIGR00023">
    <property type="entry name" value="glycerol-3-phosphate 1-O-acyltransferase PlsY"/>
    <property type="match status" value="1"/>
</dbReference>
<dbReference type="PANTHER" id="PTHR30309:SF0">
    <property type="entry name" value="GLYCEROL-3-PHOSPHATE ACYLTRANSFERASE-RELATED"/>
    <property type="match status" value="1"/>
</dbReference>
<dbReference type="PANTHER" id="PTHR30309">
    <property type="entry name" value="INNER MEMBRANE PROTEIN YGIH"/>
    <property type="match status" value="1"/>
</dbReference>
<dbReference type="Pfam" id="PF02660">
    <property type="entry name" value="G3P_acyltransf"/>
    <property type="match status" value="1"/>
</dbReference>
<dbReference type="SMART" id="SM01207">
    <property type="entry name" value="G3P_acyltransf"/>
    <property type="match status" value="1"/>
</dbReference>
<evidence type="ECO:0000255" key="1">
    <source>
        <dbReference type="HAMAP-Rule" id="MF_01043"/>
    </source>
</evidence>
<feature type="chain" id="PRO_0000188421" description="Glycerol-3-phosphate acyltransferase">
    <location>
        <begin position="1"/>
        <end position="203"/>
    </location>
</feature>
<feature type="transmembrane region" description="Helical" evidence="1">
    <location>
        <begin position="4"/>
        <end position="24"/>
    </location>
</feature>
<feature type="transmembrane region" description="Helical" evidence="1">
    <location>
        <begin position="80"/>
        <end position="100"/>
    </location>
</feature>
<feature type="transmembrane region" description="Helical" evidence="1">
    <location>
        <begin position="116"/>
        <end position="136"/>
    </location>
</feature>
<feature type="transmembrane region" description="Helical" evidence="1">
    <location>
        <begin position="138"/>
        <end position="158"/>
    </location>
</feature>
<gene>
    <name evidence="1" type="primary">plsY</name>
    <name type="ordered locus">PBPRA0435</name>
</gene>